<gene>
    <name type="primary">ygeN</name>
    <name type="synonym">ygeM</name>
    <name type="ordered locus">b2858</name>
    <name type="ordered locus">JW5459/JW5460</name>
    <name type="ORF">b2857</name>
</gene>
<name>YGEN_ECOLI</name>
<reference key="1">
    <citation type="journal article" date="1997" name="Science">
        <title>The complete genome sequence of Escherichia coli K-12.</title>
        <authorList>
            <person name="Blattner F.R."/>
            <person name="Plunkett G. III"/>
            <person name="Bloch C.A."/>
            <person name="Perna N.T."/>
            <person name="Burland V."/>
            <person name="Riley M."/>
            <person name="Collado-Vides J."/>
            <person name="Glasner J.D."/>
            <person name="Rode C.K."/>
            <person name="Mayhew G.F."/>
            <person name="Gregor J."/>
            <person name="Davis N.W."/>
            <person name="Kirkpatrick H.A."/>
            <person name="Goeden M.A."/>
            <person name="Rose D.J."/>
            <person name="Mau B."/>
            <person name="Shao Y."/>
        </authorList>
    </citation>
    <scope>NUCLEOTIDE SEQUENCE [LARGE SCALE GENOMIC DNA]</scope>
    <source>
        <strain>K12 / MG1655 / ATCC 47076</strain>
    </source>
</reference>
<reference key="2">
    <citation type="journal article" date="2006" name="Mol. Syst. Biol.">
        <title>Highly accurate genome sequences of Escherichia coli K-12 strains MG1655 and W3110.</title>
        <authorList>
            <person name="Hayashi K."/>
            <person name="Morooka N."/>
            <person name="Yamamoto Y."/>
            <person name="Fujita K."/>
            <person name="Isono K."/>
            <person name="Choi S."/>
            <person name="Ohtsubo E."/>
            <person name="Baba T."/>
            <person name="Wanner B.L."/>
            <person name="Mori H."/>
            <person name="Horiuchi T."/>
        </authorList>
    </citation>
    <scope>NUCLEOTIDE SEQUENCE [LARGE SCALE GENOMIC DNA]</scope>
    <source>
        <strain>K12 / W3110 / ATCC 27325 / DSM 5911</strain>
    </source>
</reference>
<proteinExistence type="uncertain"/>
<feature type="chain" id="PRO_0000252283" description="Putative uncharacterized protein YgeN">
    <location>
        <begin position="1"/>
        <end position="235"/>
    </location>
</feature>
<organism>
    <name type="scientific">Escherichia coli (strain K12)</name>
    <dbReference type="NCBI Taxonomy" id="83333"/>
    <lineage>
        <taxon>Bacteria</taxon>
        <taxon>Pseudomonadati</taxon>
        <taxon>Pseudomonadota</taxon>
        <taxon>Gammaproteobacteria</taxon>
        <taxon>Enterobacterales</taxon>
        <taxon>Enterobacteriaceae</taxon>
        <taxon>Escherichia</taxon>
    </lineage>
</organism>
<comment type="caution">
    <text evidence="1">Could be the product of a pseudogene. A frameshift in position 87 produces two separate ORFs.</text>
</comment>
<comment type="sequence caution" evidence="1">
    <conflict type="frameshift">
        <sequence resource="EMBL-CDS" id="AAA83039"/>
    </conflict>
</comment>
<comment type="sequence caution" evidence="1">
    <conflict type="frameshift">
        <sequence resource="EMBL-CDS" id="AAA83040"/>
    </conflict>
</comment>
<comment type="sequence caution" evidence="1">
    <conflict type="frameshift">
        <sequence resource="EMBL-CDS" id="BAE76925"/>
    </conflict>
</comment>
<comment type="sequence caution" evidence="1">
    <conflict type="frameshift">
        <sequence resource="EMBL" id="U00096"/>
    </conflict>
</comment>
<sequence>MRKKIEMSLIKSPANGVVIKRKISDGLKEIVSLKEKILLETTAKIQSIEEKREEKFIQGYYDGYTKGIIDEMDNFIPLISLLCSELEKKRINMINDLKSILLKPSEEVDVFIKIFESWVTKLPSISGPVNLHIPTSFKDKSLEVESYFVDKSIWNVHITFHDDKRFVFFTDQFIAEFSPQEFVDNCEQYLINNHCFSPDKVNEICEQARHYLVEKMFETHSLDMNNSVLASPEDL</sequence>
<accession>Q46793</accession>
<accession>P76640</accession>
<accession>Q2M9Y1</accession>
<accession>Q46794</accession>
<accession>Q7DFU9</accession>
<protein>
    <recommendedName>
        <fullName>Putative uncharacterized protein YgeN</fullName>
    </recommendedName>
</protein>
<dbReference type="EMBL" id="U28375">
    <property type="protein sequence ID" value="AAA83039.1"/>
    <property type="status" value="ALT_FRAME"/>
    <property type="molecule type" value="Genomic_DNA"/>
</dbReference>
<dbReference type="EMBL" id="U28375">
    <property type="protein sequence ID" value="AAA83040.1"/>
    <property type="status" value="ALT_FRAME"/>
    <property type="molecule type" value="Genomic_DNA"/>
</dbReference>
<dbReference type="EMBL" id="U00096">
    <property type="status" value="NOT_ANNOTATED_CDS"/>
    <property type="molecule type" value="Genomic_DNA"/>
</dbReference>
<dbReference type="EMBL" id="AP009048">
    <property type="protein sequence ID" value="BAE76925.1"/>
    <property type="status" value="ALT_FRAME"/>
    <property type="molecule type" value="Genomic_DNA"/>
</dbReference>
<dbReference type="PIR" id="B65069">
    <property type="entry name" value="B65069"/>
</dbReference>
<dbReference type="PIR" id="C65069">
    <property type="entry name" value="C65069"/>
</dbReference>
<dbReference type="BioGRID" id="4259234">
    <property type="interactions" value="10"/>
</dbReference>
<dbReference type="FunCoup" id="Q46793">
    <property type="interactions" value="7"/>
</dbReference>
<dbReference type="IntAct" id="Q46793">
    <property type="interactions" value="9"/>
</dbReference>
<dbReference type="KEGG" id="ecj:JW5459"/>
<dbReference type="HOGENOM" id="CLU_1803210_0_0_6"/>
<dbReference type="InParanoid" id="Q46793"/>
<dbReference type="OrthoDB" id="6428979at2"/>
<dbReference type="PhylomeDB" id="Q46793"/>
<dbReference type="Proteomes" id="UP000000625">
    <property type="component" value="Chromosome"/>
</dbReference>
<evidence type="ECO:0000305" key="1"/>
<keyword id="KW-1185">Reference proteome</keyword>